<feature type="chain" id="PRO_0000047515" description="Zinc finger and BTB domain-containing protein 21">
    <location>
        <begin position="1"/>
        <end position="1066"/>
    </location>
</feature>
<feature type="domain" description="BTB" evidence="1">
    <location>
        <begin position="30"/>
        <end position="96"/>
    </location>
</feature>
<feature type="zinc finger region" description="C2H2-type 1" evidence="2">
    <location>
        <begin position="546"/>
        <end position="569"/>
    </location>
</feature>
<feature type="zinc finger region" description="C2H2-type 2" evidence="2">
    <location>
        <begin position="575"/>
        <end position="598"/>
    </location>
</feature>
<feature type="zinc finger region" description="C2H2-type 3" evidence="2">
    <location>
        <begin position="670"/>
        <end position="692"/>
    </location>
</feature>
<feature type="zinc finger region" description="C2H2-type 4; atypical" evidence="2">
    <location>
        <begin position="748"/>
        <end position="770"/>
    </location>
</feature>
<feature type="zinc finger region" description="C2H2-type 5" evidence="2">
    <location>
        <begin position="775"/>
        <end position="798"/>
    </location>
</feature>
<feature type="zinc finger region" description="C2H2-type 6; atypical" evidence="2">
    <location>
        <begin position="909"/>
        <end position="932"/>
    </location>
</feature>
<feature type="zinc finger region" description="C2H2-type 7" evidence="2">
    <location>
        <begin position="937"/>
        <end position="959"/>
    </location>
</feature>
<feature type="zinc finger region" description="C2H2-type 8" evidence="2">
    <location>
        <begin position="1043"/>
        <end position="1065"/>
    </location>
</feature>
<feature type="region of interest" description="Mediates homodimerization">
    <location>
        <begin position="30"/>
        <end position="96"/>
    </location>
</feature>
<feature type="region of interest" description="Disordered" evidence="3">
    <location>
        <begin position="154"/>
        <end position="196"/>
    </location>
</feature>
<feature type="region of interest" description="Disordered" evidence="3">
    <location>
        <begin position="388"/>
        <end position="442"/>
    </location>
</feature>
<feature type="region of interest" description="Disordered" evidence="3">
    <location>
        <begin position="454"/>
        <end position="485"/>
    </location>
</feature>
<feature type="region of interest" description="Disordered" evidence="3">
    <location>
        <begin position="498"/>
        <end position="525"/>
    </location>
</feature>
<feature type="region of interest" description="Disordered" evidence="3">
    <location>
        <begin position="806"/>
        <end position="840"/>
    </location>
</feature>
<feature type="region of interest" description="Disordered" evidence="3">
    <location>
        <begin position="879"/>
        <end position="906"/>
    </location>
</feature>
<feature type="region of interest" description="Disordered" evidence="3">
    <location>
        <begin position="963"/>
        <end position="1014"/>
    </location>
</feature>
<feature type="compositionally biased region" description="Polar residues" evidence="3">
    <location>
        <begin position="154"/>
        <end position="177"/>
    </location>
</feature>
<feature type="compositionally biased region" description="Basic and acidic residues" evidence="3">
    <location>
        <begin position="388"/>
        <end position="399"/>
    </location>
</feature>
<feature type="compositionally biased region" description="Basic and acidic residues" evidence="3">
    <location>
        <begin position="466"/>
        <end position="478"/>
    </location>
</feature>
<feature type="compositionally biased region" description="Polar residues" evidence="3">
    <location>
        <begin position="820"/>
        <end position="831"/>
    </location>
</feature>
<feature type="compositionally biased region" description="Acidic residues" evidence="3">
    <location>
        <begin position="882"/>
        <end position="891"/>
    </location>
</feature>
<feature type="compositionally biased region" description="Pro residues" evidence="3">
    <location>
        <begin position="979"/>
        <end position="995"/>
    </location>
</feature>
<feature type="modified residue" description="Phosphoserine" evidence="13">
    <location>
        <position position="345"/>
    </location>
</feature>
<feature type="modified residue" description="Phosphoserine" evidence="8">
    <location>
        <position position="381"/>
    </location>
</feature>
<feature type="modified residue" description="Phosphoserine" evidence="9 10 13 14">
    <location>
        <position position="411"/>
    </location>
</feature>
<feature type="modified residue" description="Phosphoserine" evidence="8 9 13">
    <location>
        <position position="422"/>
    </location>
</feature>
<feature type="modified residue" description="Phosphothreonine" evidence="9 10 12 13">
    <location>
        <position position="431"/>
    </location>
</feature>
<feature type="modified residue" description="Phosphoserine" evidence="9 12">
    <location>
        <position position="434"/>
    </location>
</feature>
<feature type="modified residue" description="Phosphoserine" evidence="9 10 13">
    <location>
        <position position="435"/>
    </location>
</feature>
<feature type="modified residue" description="Phosphoserine" evidence="9">
    <location>
        <position position="438"/>
    </location>
</feature>
<feature type="modified residue" description="Phosphoserine" evidence="9 11 13">
    <location>
        <position position="605"/>
    </location>
</feature>
<feature type="modified residue" description="Phosphoserine" evidence="7 11 13">
    <location>
        <position position="714"/>
    </location>
</feature>
<feature type="modified residue" description="Phosphoserine" evidence="9 10 13">
    <location>
        <position position="1003"/>
    </location>
</feature>
<feature type="cross-link" description="Glycyl lysine isopeptide (Lys-Gly) (interchain with G-Cter in SUMO1); alternate" evidence="15">
    <location>
        <position position="40"/>
    </location>
</feature>
<feature type="cross-link" description="Glycyl lysine isopeptide (Lys-Gly) (interchain with G-Cter in SUMO2); alternate" evidence="15 16 17 18 19">
    <location>
        <position position="40"/>
    </location>
</feature>
<feature type="cross-link" description="Glycyl lysine isopeptide (Lys-Gly) (interchain with G-Cter in SUMO2)" evidence="19">
    <location>
        <position position="255"/>
    </location>
</feature>
<feature type="cross-link" description="Glycyl lysine isopeptide (Lys-Gly) (interchain with G-Cter in SUMO2)" evidence="19">
    <location>
        <position position="266"/>
    </location>
</feature>
<feature type="cross-link" description="Glycyl lysine isopeptide (Lys-Gly) (interchain with G-Cter in SUMO2)" evidence="19">
    <location>
        <position position="273"/>
    </location>
</feature>
<feature type="cross-link" description="Glycyl lysine isopeptide (Lys-Gly) (interchain with G-Cter in SUMO2)" evidence="19">
    <location>
        <position position="312"/>
    </location>
</feature>
<feature type="cross-link" description="Glycyl lysine isopeptide (Lys-Gly) (interchain with G-Cter in SUMO2)" evidence="19">
    <location>
        <position position="337"/>
    </location>
</feature>
<feature type="cross-link" description="Glycyl lysine isopeptide (Lys-Gly) (interchain with G-Cter in SUMO2)" evidence="19">
    <location>
        <position position="383"/>
    </location>
</feature>
<feature type="cross-link" description="Glycyl lysine isopeptide (Lys-Gly) (interchain with G-Cter in SUMO2)" evidence="16 18 19">
    <location>
        <position position="430"/>
    </location>
</feature>
<feature type="cross-link" description="Glycyl lysine isopeptide (Lys-Gly) (interchain with G-Cter in SUMO2)" evidence="16 18 19">
    <location>
        <position position="469"/>
    </location>
</feature>
<feature type="cross-link" description="Glycyl lysine isopeptide (Lys-Gly) (interchain with G-Cter in SUMO2)" evidence="19">
    <location>
        <position position="475"/>
    </location>
</feature>
<feature type="cross-link" description="Glycyl lysine isopeptide (Lys-Gly) (interchain with G-Cter in SUMO2)" evidence="16 19">
    <location>
        <position position="617"/>
    </location>
</feature>
<feature type="cross-link" description="Glycyl lysine isopeptide (Lys-Gly) (interchain with G-Cter in SUMO2)" evidence="19">
    <location>
        <position position="643"/>
    </location>
</feature>
<feature type="cross-link" description="Glycyl lysine isopeptide (Lys-Gly) (interchain with G-Cter in SUMO2)" evidence="19">
    <location>
        <position position="659"/>
    </location>
</feature>
<feature type="cross-link" description="Glycyl lysine isopeptide (Lys-Gly) (interchain with G-Cter in SUMO2)" evidence="19">
    <location>
        <position position="702"/>
    </location>
</feature>
<feature type="cross-link" description="Glycyl lysine isopeptide (Lys-Gly) (interchain with G-Cter in SUMO2)" evidence="19">
    <location>
        <position position="763"/>
    </location>
</feature>
<feature type="cross-link" description="Glycyl lysine isopeptide (Lys-Gly) (interchain with G-Cter in SUMO2)" evidence="19">
    <location>
        <position position="785"/>
    </location>
</feature>
<feature type="cross-link" description="Glycyl lysine isopeptide (Lys-Gly) (interchain with G-Cter in SUMO2)" evidence="19">
    <location>
        <position position="875"/>
    </location>
</feature>
<feature type="cross-link" description="Glycyl lysine isopeptide (Lys-Gly) (interchain with G-Cter in SUMO1); alternate" evidence="15">
    <location>
        <position position="879"/>
    </location>
</feature>
<feature type="cross-link" description="Glycyl lysine isopeptide (Lys-Gly) (interchain with G-Cter in SUMO2); alternate" evidence="15 16 18 19">
    <location>
        <position position="879"/>
    </location>
</feature>
<feature type="cross-link" description="Glycyl lysine isopeptide (Lys-Gly) (interchain with G-Cter in SUMO2)" evidence="19">
    <location>
        <position position="935"/>
    </location>
</feature>
<feature type="splice variant" id="VSP_041349" description="In isoform 2." evidence="5">
    <location>
        <begin position="535"/>
        <end position="735"/>
    </location>
</feature>
<feature type="sequence variant" id="VAR_052807" description="In dbSNP:rs871545.">
    <original>N</original>
    <variation>S</variation>
    <location>
        <position position="185"/>
    </location>
</feature>
<feature type="sequence variant" id="VAR_052808" description="In dbSNP:rs871546.">
    <original>K</original>
    <variation>Q</variation>
    <location>
        <position position="218"/>
    </location>
</feature>
<feature type="sequence conflict" description="In Ref. 5; AAH63290." evidence="6" ref="5">
    <original>S</original>
    <variation>P</variation>
    <location>
        <position position="961"/>
    </location>
</feature>
<feature type="turn" evidence="20">
    <location>
        <begin position="725"/>
        <end position="727"/>
    </location>
</feature>
<feature type="helix" evidence="20">
    <location>
        <begin position="734"/>
        <end position="746"/>
    </location>
</feature>
<feature type="turn" evidence="20">
    <location>
        <begin position="751"/>
        <end position="753"/>
    </location>
</feature>
<feature type="strand" evidence="20">
    <location>
        <begin position="757"/>
        <end position="759"/>
    </location>
</feature>
<feature type="helix" evidence="20">
    <location>
        <begin position="760"/>
        <end position="769"/>
    </location>
</feature>
<feature type="helix" evidence="20">
    <location>
        <begin position="773"/>
        <end position="775"/>
    </location>
</feature>
<feature type="helix" evidence="20">
    <location>
        <begin position="778"/>
        <end position="780"/>
    </location>
</feature>
<feature type="helix" evidence="20">
    <location>
        <begin position="787"/>
        <end position="796"/>
    </location>
</feature>
<name>ZBT21_HUMAN</name>
<organism>
    <name type="scientific">Homo sapiens</name>
    <name type="common">Human</name>
    <dbReference type="NCBI Taxonomy" id="9606"/>
    <lineage>
        <taxon>Eukaryota</taxon>
        <taxon>Metazoa</taxon>
        <taxon>Chordata</taxon>
        <taxon>Craniata</taxon>
        <taxon>Vertebrata</taxon>
        <taxon>Euteleostomi</taxon>
        <taxon>Mammalia</taxon>
        <taxon>Eutheria</taxon>
        <taxon>Euarchontoglires</taxon>
        <taxon>Primates</taxon>
        <taxon>Haplorrhini</taxon>
        <taxon>Catarrhini</taxon>
        <taxon>Hominidae</taxon>
        <taxon>Homo</taxon>
    </lineage>
</organism>
<protein>
    <recommendedName>
        <fullName>Zinc finger and BTB domain-containing protein 21</fullName>
    </recommendedName>
    <alternativeName>
        <fullName>Zinc finger protein 295</fullName>
    </alternativeName>
</protein>
<gene>
    <name type="primary">ZBTB21</name>
    <name type="synonym">KIAA1227</name>
    <name type="synonym">ZNF295</name>
</gene>
<sequence>MEGLLHYINPAHAISLLSALNEERLKGQLCDVLLIVGDQKFRAHKNVLAASSEYFQSLFTNKENESQTVFQLDFCEPDAFDNVLNYIYSSSLFVEKSSLAAVQELGYSLGISFLTNIVSKTPQAPFPTCPNRKKVFVEDDENSSQKRSVIVCQSRNEAQGKTVSQNQPDVSHTSRPSPSIAVKANTNKPHVPKPIEPLHNLSLTEKSWPKDSSVVYAKSLEHSGSLDDPNRISLVKRNAVLPSKPLQDREAMDDKPGVSGQLPKGKALELALKRPRPPVLSVCSSSETPYLLKETNKGNGQGEDRNLLYYSKLGLVIPSSGSGSGNQSIDRSGPLVKSLLRRSLSMDSQVPVYSPSIDLKSSQGSSSVSSDAPGNVLCALSQKSSLKDCSEKTALDDRPQVLQPHRLRSFSASQSTDREGASPVTEVRIKTEPSSPLSDPSDIIRVTVGDAATTAAASSSSVTRDLSLKTEDDQKDMSRLPAKRRFQADRRLPFKKLKVNEHGSPVSEDNFEEGSSPTLLDADFPDSDLNKDEFGELEGTRPNKKFKCKHCLKIFRSTAGLHRHVNMYHNPEKPYACDICHKRFHTNFKVWTHCQTQHGIVKNPSPASSSHAVLDEKFQRKLIDIVREREIKKALIIKLRRGKPGFQGQSSSQAQQVIKRNLRSRAKGAYICTYCGKAYRFLSQFKQHIKMHPGEKPLGVNKVAKPKEHAPLASPVENKEVYQCRLCNAKLSSLLEQGSHERLCRNAAVCPYCSLRFFSPELKQEHESKCEYKKLTCLECMRTFKSSFSIWRHQVEVHNQNNMAPTENFSLPVLDHNGDVTGSSRPQSQPEPNKVNHIVTTKDDNVFSDSSEQVNFDSEDSSCLPEDLSLSKQLKIQVKEEPVEEAEEEAPEASTAPKEAGPSKEASLWPCEKCGKMFTVHKQLERHQELLCSVKPFICHVCNKAFRTNFRLWSHFQSHMSQASEESAHKESEVCPVPTNSPSPPPLPPPPPLPKIQPLEPDSPTGLSENPTPATEKLFVPQESDTLFYHAPPLSAITFKRQFMCKLCHRTFKTAFSLWSHEQTHN</sequence>
<keyword id="KW-0002">3D-structure</keyword>
<keyword id="KW-0025">Alternative splicing</keyword>
<keyword id="KW-0238">DNA-binding</keyword>
<keyword id="KW-1017">Isopeptide bond</keyword>
<keyword id="KW-0479">Metal-binding</keyword>
<keyword id="KW-0539">Nucleus</keyword>
<keyword id="KW-0597">Phosphoprotein</keyword>
<keyword id="KW-1267">Proteomics identification</keyword>
<keyword id="KW-1185">Reference proteome</keyword>
<keyword id="KW-0677">Repeat</keyword>
<keyword id="KW-0804">Transcription</keyword>
<keyword id="KW-0805">Transcription regulation</keyword>
<keyword id="KW-0832">Ubl conjugation</keyword>
<keyword id="KW-0862">Zinc</keyword>
<keyword id="KW-0863">Zinc-finger</keyword>
<proteinExistence type="evidence at protein level"/>
<dbReference type="EMBL" id="AB041014">
    <property type="protein sequence ID" value="BAD74063.1"/>
    <property type="molecule type" value="mRNA"/>
</dbReference>
<dbReference type="EMBL" id="AB041015">
    <property type="protein sequence ID" value="BAD74064.1"/>
    <property type="molecule type" value="mRNA"/>
</dbReference>
<dbReference type="EMBL" id="AB033053">
    <property type="protein sequence ID" value="BAA86541.1"/>
    <property type="status" value="ALT_INIT"/>
    <property type="molecule type" value="mRNA"/>
</dbReference>
<dbReference type="EMBL" id="AP001745">
    <property type="protein sequence ID" value="BAA95529.1"/>
    <property type="molecule type" value="Genomic_DNA"/>
</dbReference>
<dbReference type="EMBL" id="CH471079">
    <property type="protein sequence ID" value="EAX09579.1"/>
    <property type="molecule type" value="Genomic_DNA"/>
</dbReference>
<dbReference type="EMBL" id="CH471079">
    <property type="protein sequence ID" value="EAX09580.1"/>
    <property type="molecule type" value="Genomic_DNA"/>
</dbReference>
<dbReference type="EMBL" id="CH471079">
    <property type="protein sequence ID" value="EAX09581.1"/>
    <property type="molecule type" value="Genomic_DNA"/>
</dbReference>
<dbReference type="EMBL" id="BC063290">
    <property type="protein sequence ID" value="AAH63290.1"/>
    <property type="molecule type" value="mRNA"/>
</dbReference>
<dbReference type="CCDS" id="CCDS13678.1">
    <molecule id="Q9ULJ3-1"/>
</dbReference>
<dbReference type="CCDS" id="CCDS42934.1">
    <molecule id="Q9ULJ3-2"/>
</dbReference>
<dbReference type="RefSeq" id="NP_001091872.1">
    <molecule id="Q9ULJ3-1"/>
    <property type="nucleotide sequence ID" value="NM_001098402.2"/>
</dbReference>
<dbReference type="RefSeq" id="NP_001091873.1">
    <molecule id="Q9ULJ3-2"/>
    <property type="nucleotide sequence ID" value="NM_001098403.2"/>
</dbReference>
<dbReference type="RefSeq" id="NP_001307658.1">
    <molecule id="Q9ULJ3-2"/>
    <property type="nucleotide sequence ID" value="NM_001320729.2"/>
</dbReference>
<dbReference type="RefSeq" id="NP_001307660.1">
    <molecule id="Q9ULJ3-1"/>
    <property type="nucleotide sequence ID" value="NM_001320731.2"/>
</dbReference>
<dbReference type="RefSeq" id="NP_065778.3">
    <molecule id="Q9ULJ3-1"/>
    <property type="nucleotide sequence ID" value="NM_020727.4"/>
</dbReference>
<dbReference type="RefSeq" id="XP_005261178.1">
    <molecule id="Q9ULJ3-1"/>
    <property type="nucleotide sequence ID" value="XM_005261121.4"/>
</dbReference>
<dbReference type="RefSeq" id="XP_011527890.1">
    <molecule id="Q9ULJ3-1"/>
    <property type="nucleotide sequence ID" value="XM_011529588.3"/>
</dbReference>
<dbReference type="RefSeq" id="XP_011527892.1">
    <property type="nucleotide sequence ID" value="XM_011529590.2"/>
</dbReference>
<dbReference type="RefSeq" id="XP_016883849.1">
    <molecule id="Q9ULJ3-1"/>
    <property type="nucleotide sequence ID" value="XM_017028360.2"/>
</dbReference>
<dbReference type="RefSeq" id="XP_016883850.1">
    <property type="nucleotide sequence ID" value="XM_017028361.1"/>
</dbReference>
<dbReference type="RefSeq" id="XP_047296742.1">
    <molecule id="Q9ULJ3-1"/>
    <property type="nucleotide sequence ID" value="XM_047440786.1"/>
</dbReference>
<dbReference type="RefSeq" id="XP_047296743.1">
    <molecule id="Q9ULJ3-1"/>
    <property type="nucleotide sequence ID" value="XM_047440787.1"/>
</dbReference>
<dbReference type="RefSeq" id="XP_047296744.1">
    <molecule id="Q9ULJ3-1"/>
    <property type="nucleotide sequence ID" value="XM_047440788.1"/>
</dbReference>
<dbReference type="RefSeq" id="XP_047296745.1">
    <molecule id="Q9ULJ3-1"/>
    <property type="nucleotide sequence ID" value="XM_047440789.1"/>
</dbReference>
<dbReference type="RefSeq" id="XP_047296746.1">
    <molecule id="Q9ULJ3-1"/>
    <property type="nucleotide sequence ID" value="XM_047440790.1"/>
</dbReference>
<dbReference type="RefSeq" id="XP_047296747.1">
    <molecule id="Q9ULJ3-1"/>
    <property type="nucleotide sequence ID" value="XM_047440791.1"/>
</dbReference>
<dbReference type="RefSeq" id="XP_047296748.1">
    <molecule id="Q9ULJ3-2"/>
    <property type="nucleotide sequence ID" value="XM_047440792.1"/>
</dbReference>
<dbReference type="RefSeq" id="XP_047296749.1">
    <molecule id="Q9ULJ3-2"/>
    <property type="nucleotide sequence ID" value="XM_047440793.1"/>
</dbReference>
<dbReference type="RefSeq" id="XP_047296750.1">
    <molecule id="Q9ULJ3-2"/>
    <property type="nucleotide sequence ID" value="XM_047440794.1"/>
</dbReference>
<dbReference type="RefSeq" id="XP_047296751.1">
    <molecule id="Q9ULJ3-2"/>
    <property type="nucleotide sequence ID" value="XM_047440795.1"/>
</dbReference>
<dbReference type="RefSeq" id="XP_047296752.1">
    <molecule id="Q9ULJ3-2"/>
    <property type="nucleotide sequence ID" value="XM_047440796.1"/>
</dbReference>
<dbReference type="RefSeq" id="XP_047296753.1">
    <molecule id="Q9ULJ3-2"/>
    <property type="nucleotide sequence ID" value="XM_047440797.1"/>
</dbReference>
<dbReference type="PDB" id="1WJP">
    <property type="method" value="NMR"/>
    <property type="chains" value="A=713-806"/>
</dbReference>
<dbReference type="PDBsum" id="1WJP"/>
<dbReference type="BMRB" id="Q9ULJ3"/>
<dbReference type="SMR" id="Q9ULJ3"/>
<dbReference type="BioGRID" id="119066">
    <property type="interactions" value="169"/>
</dbReference>
<dbReference type="FunCoup" id="Q9ULJ3">
    <property type="interactions" value="4191"/>
</dbReference>
<dbReference type="IntAct" id="Q9ULJ3">
    <property type="interactions" value="54"/>
</dbReference>
<dbReference type="MINT" id="Q9ULJ3"/>
<dbReference type="STRING" id="9606.ENSP00000308759"/>
<dbReference type="ChEMBL" id="CHEMBL5069368"/>
<dbReference type="GlyGen" id="Q9ULJ3">
    <property type="glycosylation" value="6 sites, 1 N-linked glycan (1 site), 1 O-linked glycan (4 sites)"/>
</dbReference>
<dbReference type="iPTMnet" id="Q9ULJ3"/>
<dbReference type="PhosphoSitePlus" id="Q9ULJ3"/>
<dbReference type="SwissPalm" id="Q9ULJ3"/>
<dbReference type="BioMuta" id="ZBTB21"/>
<dbReference type="DMDM" id="9979550"/>
<dbReference type="jPOST" id="Q9ULJ3"/>
<dbReference type="MassIVE" id="Q9ULJ3"/>
<dbReference type="PaxDb" id="9606-ENSP00000308759"/>
<dbReference type="PeptideAtlas" id="Q9ULJ3"/>
<dbReference type="ProteomicsDB" id="85046">
    <molecule id="Q9ULJ3-1"/>
</dbReference>
<dbReference type="ProteomicsDB" id="85047">
    <molecule id="Q9ULJ3-2"/>
</dbReference>
<dbReference type="Pumba" id="Q9ULJ3"/>
<dbReference type="ABCD" id="Q9ULJ3">
    <property type="antibodies" value="3 sequenced antibodies"/>
</dbReference>
<dbReference type="Antibodypedia" id="9340">
    <property type="antibodies" value="99 antibodies from 25 providers"/>
</dbReference>
<dbReference type="DNASU" id="49854"/>
<dbReference type="Ensembl" id="ENST00000310826.10">
    <molecule id="Q9ULJ3-1"/>
    <property type="protein sequence ID" value="ENSP00000308759.5"/>
    <property type="gene ID" value="ENSG00000173276.14"/>
</dbReference>
<dbReference type="Ensembl" id="ENST00000398499.5">
    <molecule id="Q9ULJ3-1"/>
    <property type="protein sequence ID" value="ENSP00000381512.1"/>
    <property type="gene ID" value="ENSG00000173276.14"/>
</dbReference>
<dbReference type="Ensembl" id="ENST00000398505.7">
    <molecule id="Q9ULJ3-2"/>
    <property type="protein sequence ID" value="ENSP00000381517.3"/>
    <property type="gene ID" value="ENSG00000173276.14"/>
</dbReference>
<dbReference type="Ensembl" id="ENST00000398511.3">
    <molecule id="Q9ULJ3-1"/>
    <property type="protein sequence ID" value="ENSP00000381523.3"/>
    <property type="gene ID" value="ENSG00000173276.14"/>
</dbReference>
<dbReference type="GeneID" id="49854"/>
<dbReference type="KEGG" id="hsa:49854"/>
<dbReference type="MANE-Select" id="ENST00000310826.10">
    <property type="protein sequence ID" value="ENSP00000308759.5"/>
    <property type="RefSeq nucleotide sequence ID" value="NM_001098402.2"/>
    <property type="RefSeq protein sequence ID" value="NP_001091872.1"/>
</dbReference>
<dbReference type="UCSC" id="uc002yzy.5">
    <molecule id="Q9ULJ3-1"/>
    <property type="organism name" value="human"/>
</dbReference>
<dbReference type="AGR" id="HGNC:13083"/>
<dbReference type="CTD" id="49854"/>
<dbReference type="DisGeNET" id="49854"/>
<dbReference type="GeneCards" id="ZBTB21"/>
<dbReference type="HGNC" id="HGNC:13083">
    <property type="gene designation" value="ZBTB21"/>
</dbReference>
<dbReference type="HPA" id="ENSG00000173276">
    <property type="expression patterns" value="Tissue enhanced (bone)"/>
</dbReference>
<dbReference type="MIM" id="616485">
    <property type="type" value="gene"/>
</dbReference>
<dbReference type="neXtProt" id="NX_Q9ULJ3"/>
<dbReference type="OpenTargets" id="ENSG00000173276"/>
<dbReference type="PharmGKB" id="PA37659"/>
<dbReference type="VEuPathDB" id="HostDB:ENSG00000173276"/>
<dbReference type="eggNOG" id="KOG1721">
    <property type="taxonomic scope" value="Eukaryota"/>
</dbReference>
<dbReference type="GeneTree" id="ENSGT00940000161028"/>
<dbReference type="HOGENOM" id="CLU_014382_0_0_1"/>
<dbReference type="InParanoid" id="Q9ULJ3"/>
<dbReference type="OMA" id="PMDIIRI"/>
<dbReference type="OrthoDB" id="6359816at2759"/>
<dbReference type="PAN-GO" id="Q9ULJ3">
    <property type="GO annotations" value="5 GO annotations based on evolutionary models"/>
</dbReference>
<dbReference type="PhylomeDB" id="Q9ULJ3"/>
<dbReference type="TreeFam" id="TF331184"/>
<dbReference type="PathwayCommons" id="Q9ULJ3"/>
<dbReference type="SignaLink" id="Q9ULJ3"/>
<dbReference type="BioGRID-ORCS" id="49854">
    <property type="hits" value="15 hits in 1222 CRISPR screens"/>
</dbReference>
<dbReference type="ChiTaRS" id="ZBTB21">
    <property type="organism name" value="human"/>
</dbReference>
<dbReference type="EvolutionaryTrace" id="Q9ULJ3"/>
<dbReference type="GeneWiki" id="ZNF295"/>
<dbReference type="GenomeRNAi" id="49854"/>
<dbReference type="Pharos" id="Q9ULJ3">
    <property type="development level" value="Tbio"/>
</dbReference>
<dbReference type="PRO" id="PR:Q9ULJ3"/>
<dbReference type="Proteomes" id="UP000005640">
    <property type="component" value="Chromosome 21"/>
</dbReference>
<dbReference type="RNAct" id="Q9ULJ3">
    <property type="molecule type" value="protein"/>
</dbReference>
<dbReference type="Bgee" id="ENSG00000173276">
    <property type="expression patterns" value="Expressed in cauda epididymis and 184 other cell types or tissues"/>
</dbReference>
<dbReference type="ExpressionAtlas" id="Q9ULJ3">
    <property type="expression patterns" value="baseline and differential"/>
</dbReference>
<dbReference type="GO" id="GO:0005829">
    <property type="term" value="C:cytosol"/>
    <property type="evidence" value="ECO:0000314"/>
    <property type="project" value="HPA"/>
</dbReference>
<dbReference type="GO" id="GO:0005654">
    <property type="term" value="C:nucleoplasm"/>
    <property type="evidence" value="ECO:0000314"/>
    <property type="project" value="HPA"/>
</dbReference>
<dbReference type="GO" id="GO:0005634">
    <property type="term" value="C:nucleus"/>
    <property type="evidence" value="ECO:0000314"/>
    <property type="project" value="UniProtKB"/>
</dbReference>
<dbReference type="GO" id="GO:0000981">
    <property type="term" value="F:DNA-binding transcription factor activity, RNA polymerase II-specific"/>
    <property type="evidence" value="ECO:0000318"/>
    <property type="project" value="GO_Central"/>
</dbReference>
<dbReference type="GO" id="GO:0001227">
    <property type="term" value="F:DNA-binding transcription repressor activity, RNA polymerase II-specific"/>
    <property type="evidence" value="ECO:0000314"/>
    <property type="project" value="ARUK-UCL"/>
</dbReference>
<dbReference type="GO" id="GO:0042802">
    <property type="term" value="F:identical protein binding"/>
    <property type="evidence" value="ECO:0000353"/>
    <property type="project" value="UniProtKB"/>
</dbReference>
<dbReference type="GO" id="GO:0008327">
    <property type="term" value="F:methyl-CpG binding"/>
    <property type="evidence" value="ECO:0000314"/>
    <property type="project" value="UniProtKB"/>
</dbReference>
<dbReference type="GO" id="GO:0031208">
    <property type="term" value="F:POZ domain binding"/>
    <property type="evidence" value="ECO:0000314"/>
    <property type="project" value="UniProtKB"/>
</dbReference>
<dbReference type="GO" id="GO:0008270">
    <property type="term" value="F:zinc ion binding"/>
    <property type="evidence" value="ECO:0007669"/>
    <property type="project" value="UniProtKB-KW"/>
</dbReference>
<dbReference type="GO" id="GO:0045892">
    <property type="term" value="P:negative regulation of DNA-templated transcription"/>
    <property type="evidence" value="ECO:0000318"/>
    <property type="project" value="GO_Central"/>
</dbReference>
<dbReference type="GO" id="GO:0000122">
    <property type="term" value="P:negative regulation of transcription by RNA polymerase II"/>
    <property type="evidence" value="ECO:0000314"/>
    <property type="project" value="UniProtKB"/>
</dbReference>
<dbReference type="GO" id="GO:0006357">
    <property type="term" value="P:regulation of transcription by RNA polymerase II"/>
    <property type="evidence" value="ECO:0000318"/>
    <property type="project" value="GO_Central"/>
</dbReference>
<dbReference type="CDD" id="cd18209">
    <property type="entry name" value="BTB_POZ_ZBTB21_ZNF295"/>
    <property type="match status" value="1"/>
</dbReference>
<dbReference type="FunFam" id="3.30.160.60:FF:000897">
    <property type="entry name" value="Zinc finger and BTB domain-containing protein 21"/>
    <property type="match status" value="1"/>
</dbReference>
<dbReference type="FunFam" id="3.30.160.60:FF:001424">
    <property type="entry name" value="Zinc finger and BTB domain-containing protein 21"/>
    <property type="match status" value="1"/>
</dbReference>
<dbReference type="FunFam" id="3.30.160.60:FF:001705">
    <property type="entry name" value="Zinc finger and BTB domain-containing protein 21"/>
    <property type="match status" value="1"/>
</dbReference>
<dbReference type="FunFam" id="3.30.160.60:FF:000777">
    <property type="entry name" value="zinc finger and BTB domain-containing protein 21"/>
    <property type="match status" value="1"/>
</dbReference>
<dbReference type="FunFam" id="3.30.160.60:FF:000921">
    <property type="entry name" value="zinc finger and BTB domain-containing protein 21"/>
    <property type="match status" value="1"/>
</dbReference>
<dbReference type="FunFam" id="3.30.160.60:FF:001637">
    <property type="entry name" value="zinc finger and BTB domain-containing protein 21"/>
    <property type="match status" value="1"/>
</dbReference>
<dbReference type="FunFam" id="3.30.710.10:FF:000065">
    <property type="entry name" value="zinc finger and BTB domain-containing protein 21"/>
    <property type="match status" value="1"/>
</dbReference>
<dbReference type="Gene3D" id="3.30.160.60">
    <property type="entry name" value="Classic Zinc Finger"/>
    <property type="match status" value="7"/>
</dbReference>
<dbReference type="Gene3D" id="3.30.710.10">
    <property type="entry name" value="Potassium Channel Kv1.1, Chain A"/>
    <property type="match status" value="1"/>
</dbReference>
<dbReference type="InterPro" id="IPR000210">
    <property type="entry name" value="BTB/POZ_dom"/>
</dbReference>
<dbReference type="InterPro" id="IPR011333">
    <property type="entry name" value="SKP1/BTB/POZ_sf"/>
</dbReference>
<dbReference type="InterPro" id="IPR041011">
    <property type="entry name" value="Znf_C2H2_6"/>
</dbReference>
<dbReference type="InterPro" id="IPR036236">
    <property type="entry name" value="Znf_C2H2_sf"/>
</dbReference>
<dbReference type="InterPro" id="IPR013087">
    <property type="entry name" value="Znf_C2H2_type"/>
</dbReference>
<dbReference type="PANTHER" id="PTHR24394:SF15">
    <property type="entry name" value="ZINC FINGER AND BTB DOMAIN-CONTAINING PROTEIN 21"/>
    <property type="match status" value="1"/>
</dbReference>
<dbReference type="PANTHER" id="PTHR24394">
    <property type="entry name" value="ZINC FINGER PROTEIN"/>
    <property type="match status" value="1"/>
</dbReference>
<dbReference type="Pfam" id="PF00651">
    <property type="entry name" value="BTB"/>
    <property type="match status" value="1"/>
</dbReference>
<dbReference type="Pfam" id="PF00096">
    <property type="entry name" value="zf-C2H2"/>
    <property type="match status" value="3"/>
</dbReference>
<dbReference type="Pfam" id="PF18450">
    <property type="entry name" value="zf_C2H2_6"/>
    <property type="match status" value="1"/>
</dbReference>
<dbReference type="SMART" id="SM00225">
    <property type="entry name" value="BTB"/>
    <property type="match status" value="1"/>
</dbReference>
<dbReference type="SMART" id="SM00355">
    <property type="entry name" value="ZnF_C2H2"/>
    <property type="match status" value="9"/>
</dbReference>
<dbReference type="SUPFAM" id="SSF57667">
    <property type="entry name" value="beta-beta-alpha zinc fingers"/>
    <property type="match status" value="6"/>
</dbReference>
<dbReference type="SUPFAM" id="SSF54695">
    <property type="entry name" value="POZ domain"/>
    <property type="match status" value="1"/>
</dbReference>
<dbReference type="PROSITE" id="PS50097">
    <property type="entry name" value="BTB"/>
    <property type="match status" value="1"/>
</dbReference>
<dbReference type="PROSITE" id="PS00028">
    <property type="entry name" value="ZINC_FINGER_C2H2_1"/>
    <property type="match status" value="6"/>
</dbReference>
<dbReference type="PROSITE" id="PS50157">
    <property type="entry name" value="ZINC_FINGER_C2H2_2"/>
    <property type="match status" value="6"/>
</dbReference>
<evidence type="ECO:0000255" key="1">
    <source>
        <dbReference type="PROSITE-ProRule" id="PRU00037"/>
    </source>
</evidence>
<evidence type="ECO:0000255" key="2">
    <source>
        <dbReference type="PROSITE-ProRule" id="PRU00042"/>
    </source>
</evidence>
<evidence type="ECO:0000256" key="3">
    <source>
        <dbReference type="SAM" id="MobiDB-lite"/>
    </source>
</evidence>
<evidence type="ECO:0000269" key="4">
    <source>
    </source>
</evidence>
<evidence type="ECO:0000303" key="5">
    <source>
    </source>
</evidence>
<evidence type="ECO:0000305" key="6"/>
<evidence type="ECO:0007744" key="7">
    <source>
    </source>
</evidence>
<evidence type="ECO:0007744" key="8">
    <source>
    </source>
</evidence>
<evidence type="ECO:0007744" key="9">
    <source>
    </source>
</evidence>
<evidence type="ECO:0007744" key="10">
    <source>
    </source>
</evidence>
<evidence type="ECO:0007744" key="11">
    <source>
    </source>
</evidence>
<evidence type="ECO:0007744" key="12">
    <source>
    </source>
</evidence>
<evidence type="ECO:0007744" key="13">
    <source>
    </source>
</evidence>
<evidence type="ECO:0007744" key="14">
    <source>
    </source>
</evidence>
<evidence type="ECO:0007744" key="15">
    <source>
    </source>
</evidence>
<evidence type="ECO:0007744" key="16">
    <source>
    </source>
</evidence>
<evidence type="ECO:0007744" key="17">
    <source>
    </source>
</evidence>
<evidence type="ECO:0007744" key="18">
    <source>
    </source>
</evidence>
<evidence type="ECO:0007744" key="19">
    <source>
    </source>
</evidence>
<evidence type="ECO:0007829" key="20">
    <source>
        <dbReference type="PDB" id="1WJP"/>
    </source>
</evidence>
<reference key="1">
    <citation type="journal article" date="2005" name="Biochem. Biophys. Res. Commun.">
        <title>Novel human BTB/POZ domain-containing zinc finger protein ZNF295 is directly associated with ZFP161.</title>
        <authorList>
            <person name="Wang J."/>
            <person name="Kudoh J."/>
            <person name="Takayanagi A."/>
            <person name="Shimizu N."/>
        </authorList>
    </citation>
    <scope>NUCLEOTIDE SEQUENCE [MRNA] (ISOFORMS 1 AND 2)</scope>
    <scope>FUNCTION</scope>
    <scope>INTERACTION WITH ZBTB14</scope>
    <scope>SUBCELLULAR LOCATION</scope>
    <scope>TISSUE SPECIFICITY</scope>
    <source>
        <tissue>Fetal kidney</tissue>
        <tissue>Testis</tissue>
    </source>
</reference>
<reference key="2">
    <citation type="journal article" date="1999" name="DNA Res.">
        <title>Prediction of the coding sequences of unidentified human genes. XV. The complete sequences of 100 new cDNA clones from brain which code for large proteins in vitro.</title>
        <authorList>
            <person name="Nagase T."/>
            <person name="Ishikawa K."/>
            <person name="Kikuno R."/>
            <person name="Hirosawa M."/>
            <person name="Nomura N."/>
            <person name="Ohara O."/>
        </authorList>
    </citation>
    <scope>NUCLEOTIDE SEQUENCE [LARGE SCALE MRNA] (ISOFORM 1)</scope>
    <source>
        <tissue>Brain</tissue>
    </source>
</reference>
<reference key="3">
    <citation type="journal article" date="2000" name="Nature">
        <title>The DNA sequence of human chromosome 21.</title>
        <authorList>
            <person name="Hattori M."/>
            <person name="Fujiyama A."/>
            <person name="Taylor T.D."/>
            <person name="Watanabe H."/>
            <person name="Yada T."/>
            <person name="Park H.-S."/>
            <person name="Toyoda A."/>
            <person name="Ishii K."/>
            <person name="Totoki Y."/>
            <person name="Choi D.-K."/>
            <person name="Groner Y."/>
            <person name="Soeda E."/>
            <person name="Ohki M."/>
            <person name="Takagi T."/>
            <person name="Sakaki Y."/>
            <person name="Taudien S."/>
            <person name="Blechschmidt K."/>
            <person name="Polley A."/>
            <person name="Menzel U."/>
            <person name="Delabar J."/>
            <person name="Kumpf K."/>
            <person name="Lehmann R."/>
            <person name="Patterson D."/>
            <person name="Reichwald K."/>
            <person name="Rump A."/>
            <person name="Schillhabel M."/>
            <person name="Schudy A."/>
            <person name="Zimmermann W."/>
            <person name="Rosenthal A."/>
            <person name="Kudoh J."/>
            <person name="Shibuya K."/>
            <person name="Kawasaki K."/>
            <person name="Asakawa S."/>
            <person name="Shintani A."/>
            <person name="Sasaki T."/>
            <person name="Nagamine K."/>
            <person name="Mitsuyama S."/>
            <person name="Antonarakis S.E."/>
            <person name="Minoshima S."/>
            <person name="Shimizu N."/>
            <person name="Nordsiek G."/>
            <person name="Hornischer K."/>
            <person name="Brandt P."/>
            <person name="Scharfe M."/>
            <person name="Schoen O."/>
            <person name="Desario A."/>
            <person name="Reichelt J."/>
            <person name="Kauer G."/>
            <person name="Bloecker H."/>
            <person name="Ramser J."/>
            <person name="Beck A."/>
            <person name="Klages S."/>
            <person name="Hennig S."/>
            <person name="Riesselmann L."/>
            <person name="Dagand E."/>
            <person name="Wehrmeyer S."/>
            <person name="Borzym K."/>
            <person name="Gardiner K."/>
            <person name="Nizetic D."/>
            <person name="Francis F."/>
            <person name="Lehrach H."/>
            <person name="Reinhardt R."/>
            <person name="Yaspo M.-L."/>
        </authorList>
    </citation>
    <scope>NUCLEOTIDE SEQUENCE [LARGE SCALE GENOMIC DNA]</scope>
</reference>
<reference key="4">
    <citation type="submission" date="2005-09" db="EMBL/GenBank/DDBJ databases">
        <authorList>
            <person name="Mural R.J."/>
            <person name="Istrail S."/>
            <person name="Sutton G."/>
            <person name="Florea L."/>
            <person name="Halpern A.L."/>
            <person name="Mobarry C.M."/>
            <person name="Lippert R."/>
            <person name="Walenz B."/>
            <person name="Shatkay H."/>
            <person name="Dew I."/>
            <person name="Miller J.R."/>
            <person name="Flanigan M.J."/>
            <person name="Edwards N.J."/>
            <person name="Bolanos R."/>
            <person name="Fasulo D."/>
            <person name="Halldorsson B.V."/>
            <person name="Hannenhalli S."/>
            <person name="Turner R."/>
            <person name="Yooseph S."/>
            <person name="Lu F."/>
            <person name="Nusskern D.R."/>
            <person name="Shue B.C."/>
            <person name="Zheng X.H."/>
            <person name="Zhong F."/>
            <person name="Delcher A.L."/>
            <person name="Huson D.H."/>
            <person name="Kravitz S.A."/>
            <person name="Mouchard L."/>
            <person name="Reinert K."/>
            <person name="Remington K.A."/>
            <person name="Clark A.G."/>
            <person name="Waterman M.S."/>
            <person name="Eichler E.E."/>
            <person name="Adams M.D."/>
            <person name="Hunkapiller M.W."/>
            <person name="Myers E.W."/>
            <person name="Venter J.C."/>
        </authorList>
    </citation>
    <scope>NUCLEOTIDE SEQUENCE [LARGE SCALE GENOMIC DNA]</scope>
</reference>
<reference key="5">
    <citation type="journal article" date="2004" name="Genome Res.">
        <title>The status, quality, and expansion of the NIH full-length cDNA project: the Mammalian Gene Collection (MGC).</title>
        <authorList>
            <consortium name="The MGC Project Team"/>
        </authorList>
    </citation>
    <scope>NUCLEOTIDE SEQUENCE [LARGE SCALE MRNA] (ISOFORM 1)</scope>
    <source>
        <tissue>Placenta</tissue>
    </source>
</reference>
<reference key="6">
    <citation type="journal article" date="2006" name="Cell">
        <title>Global, in vivo, and site-specific phosphorylation dynamics in signaling networks.</title>
        <authorList>
            <person name="Olsen J.V."/>
            <person name="Blagoev B."/>
            <person name="Gnad F."/>
            <person name="Macek B."/>
            <person name="Kumar C."/>
            <person name="Mortensen P."/>
            <person name="Mann M."/>
        </authorList>
    </citation>
    <scope>PHOSPHORYLATION [LARGE SCALE ANALYSIS] AT SER-714</scope>
    <scope>IDENTIFICATION BY MASS SPECTROMETRY [LARGE SCALE ANALYSIS]</scope>
    <source>
        <tissue>Cervix carcinoma</tissue>
    </source>
</reference>
<reference key="7">
    <citation type="journal article" date="2007" name="Science">
        <title>ATM and ATR substrate analysis reveals extensive protein networks responsive to DNA damage.</title>
        <authorList>
            <person name="Matsuoka S."/>
            <person name="Ballif B.A."/>
            <person name="Smogorzewska A."/>
            <person name="McDonald E.R. III"/>
            <person name="Hurov K.E."/>
            <person name="Luo J."/>
            <person name="Bakalarski C.E."/>
            <person name="Zhao Z."/>
            <person name="Solimini N."/>
            <person name="Lerenthal Y."/>
            <person name="Shiloh Y."/>
            <person name="Gygi S.P."/>
            <person name="Elledge S.J."/>
        </authorList>
    </citation>
    <scope>PHOSPHORYLATION [LARGE SCALE ANALYSIS] AT SER-381 AND SER-422</scope>
    <scope>IDENTIFICATION BY MASS SPECTROMETRY [LARGE SCALE ANALYSIS]</scope>
    <source>
        <tissue>Embryonic kidney</tissue>
    </source>
</reference>
<reference key="8">
    <citation type="journal article" date="2008" name="Proc. Natl. Acad. Sci. U.S.A.">
        <title>A quantitative atlas of mitotic phosphorylation.</title>
        <authorList>
            <person name="Dephoure N."/>
            <person name="Zhou C."/>
            <person name="Villen J."/>
            <person name="Beausoleil S.A."/>
            <person name="Bakalarski C.E."/>
            <person name="Elledge S.J."/>
            <person name="Gygi S.P."/>
        </authorList>
    </citation>
    <scope>PHOSPHORYLATION [LARGE SCALE ANALYSIS] AT SER-411; SER-422; THR-431; SER-434; SER-435; SER-438; SER-605 AND SER-1003</scope>
    <scope>IDENTIFICATION BY MASS SPECTROMETRY [LARGE SCALE ANALYSIS]</scope>
    <source>
        <tissue>Cervix carcinoma</tissue>
    </source>
</reference>
<reference key="9">
    <citation type="journal article" date="2009" name="Anal. Chem.">
        <title>Lys-N and trypsin cover complementary parts of the phosphoproteome in a refined SCX-based approach.</title>
        <authorList>
            <person name="Gauci S."/>
            <person name="Helbig A.O."/>
            <person name="Slijper M."/>
            <person name="Krijgsveld J."/>
            <person name="Heck A.J."/>
            <person name="Mohammed S."/>
        </authorList>
    </citation>
    <scope>IDENTIFICATION BY MASS SPECTROMETRY [LARGE SCALE ANALYSIS]</scope>
</reference>
<reference key="10">
    <citation type="journal article" date="2009" name="Sci. Signal.">
        <title>Quantitative phosphoproteomic analysis of T cell receptor signaling reveals system-wide modulation of protein-protein interactions.</title>
        <authorList>
            <person name="Mayya V."/>
            <person name="Lundgren D.H."/>
            <person name="Hwang S.-I."/>
            <person name="Rezaul K."/>
            <person name="Wu L."/>
            <person name="Eng J.K."/>
            <person name="Rodionov V."/>
            <person name="Han D.K."/>
        </authorList>
    </citation>
    <scope>PHOSPHORYLATION [LARGE SCALE ANALYSIS] AT SER-411; THR-431; SER-435 AND SER-1003</scope>
    <scope>IDENTIFICATION BY MASS SPECTROMETRY [LARGE SCALE ANALYSIS]</scope>
    <source>
        <tissue>Leukemic T-cell</tissue>
    </source>
</reference>
<reference key="11">
    <citation type="journal article" date="2010" name="Sci. Signal.">
        <title>Quantitative phosphoproteomics reveals widespread full phosphorylation site occupancy during mitosis.</title>
        <authorList>
            <person name="Olsen J.V."/>
            <person name="Vermeulen M."/>
            <person name="Santamaria A."/>
            <person name="Kumar C."/>
            <person name="Miller M.L."/>
            <person name="Jensen L.J."/>
            <person name="Gnad F."/>
            <person name="Cox J."/>
            <person name="Jensen T.S."/>
            <person name="Nigg E.A."/>
            <person name="Brunak S."/>
            <person name="Mann M."/>
        </authorList>
    </citation>
    <scope>PHOSPHORYLATION [LARGE SCALE ANALYSIS] AT SER-605 AND SER-714</scope>
    <scope>IDENTIFICATION BY MASS SPECTROMETRY [LARGE SCALE ANALYSIS]</scope>
    <source>
        <tissue>Cervix carcinoma</tissue>
    </source>
</reference>
<reference key="12">
    <citation type="journal article" date="2011" name="Sci. Signal.">
        <title>System-wide temporal characterization of the proteome and phosphoproteome of human embryonic stem cell differentiation.</title>
        <authorList>
            <person name="Rigbolt K.T."/>
            <person name="Prokhorova T.A."/>
            <person name="Akimov V."/>
            <person name="Henningsen J."/>
            <person name="Johansen P.T."/>
            <person name="Kratchmarova I."/>
            <person name="Kassem M."/>
            <person name="Mann M."/>
            <person name="Olsen J.V."/>
            <person name="Blagoev B."/>
        </authorList>
    </citation>
    <scope>PHOSPHORYLATION [LARGE SCALE ANALYSIS] AT THR-431 AND SER-434</scope>
    <scope>IDENTIFICATION BY MASS SPECTROMETRY [LARGE SCALE ANALYSIS]</scope>
</reference>
<reference key="13">
    <citation type="journal article" date="2013" name="J. Proteome Res.">
        <title>Toward a comprehensive characterization of a human cancer cell phosphoproteome.</title>
        <authorList>
            <person name="Zhou H."/>
            <person name="Di Palma S."/>
            <person name="Preisinger C."/>
            <person name="Peng M."/>
            <person name="Polat A.N."/>
            <person name="Heck A.J."/>
            <person name="Mohammed S."/>
        </authorList>
    </citation>
    <scope>PHOSPHORYLATION [LARGE SCALE ANALYSIS] AT SER-345; SER-411; SER-422; THR-431; SER-435; SER-605; SER-714 AND SER-1003</scope>
    <scope>IDENTIFICATION BY MASS SPECTROMETRY [LARGE SCALE ANALYSIS]</scope>
    <source>
        <tissue>Cervix carcinoma</tissue>
        <tissue>Erythroleukemia</tissue>
    </source>
</reference>
<reference key="14">
    <citation type="journal article" date="2014" name="J. Proteomics">
        <title>An enzyme assisted RP-RPLC approach for in-depth analysis of human liver phosphoproteome.</title>
        <authorList>
            <person name="Bian Y."/>
            <person name="Song C."/>
            <person name="Cheng K."/>
            <person name="Dong M."/>
            <person name="Wang F."/>
            <person name="Huang J."/>
            <person name="Sun D."/>
            <person name="Wang L."/>
            <person name="Ye M."/>
            <person name="Zou H."/>
        </authorList>
    </citation>
    <scope>PHOSPHORYLATION [LARGE SCALE ANALYSIS] AT SER-411</scope>
    <scope>IDENTIFICATION BY MASS SPECTROMETRY [LARGE SCALE ANALYSIS]</scope>
    <source>
        <tissue>Liver</tissue>
    </source>
</reference>
<reference key="15">
    <citation type="journal article" date="2014" name="Nat. Struct. Mol. Biol.">
        <title>Uncovering global SUMOylation signaling networks in a site-specific manner.</title>
        <authorList>
            <person name="Hendriks I.A."/>
            <person name="D'Souza R.C."/>
            <person name="Yang B."/>
            <person name="Verlaan-de Vries M."/>
            <person name="Mann M."/>
            <person name="Vertegaal A.C."/>
        </authorList>
    </citation>
    <scope>SUMOYLATION [LARGE SCALE ANALYSIS] AT LYS-40; LYS-430; LYS-469; LYS-617 AND LYS-879</scope>
    <scope>IDENTIFICATION BY MASS SPECTROMETRY [LARGE SCALE ANALYSIS]</scope>
</reference>
<reference key="16">
    <citation type="journal article" date="2014" name="Proc. Natl. Acad. Sci. U.S.A.">
        <title>Mapping of SUMO sites and analysis of SUMOylation changes induced by external stimuli.</title>
        <authorList>
            <person name="Impens F."/>
            <person name="Radoshevich L."/>
            <person name="Cossart P."/>
            <person name="Ribet D."/>
        </authorList>
    </citation>
    <scope>SUMOYLATION [LARGE SCALE ANALYSIS] AT LYS-40 AND LYS-879</scope>
    <scope>IDENTIFICATION BY MASS SPECTROMETRY [LARGE SCALE ANALYSIS]</scope>
</reference>
<reference key="17">
    <citation type="journal article" date="2015" name="Cell Rep.">
        <title>SUMO-2 orchestrates chromatin modifiers in response to DNA damage.</title>
        <authorList>
            <person name="Hendriks I.A."/>
            <person name="Treffers L.W."/>
            <person name="Verlaan-de Vries M."/>
            <person name="Olsen J.V."/>
            <person name="Vertegaal A.C."/>
        </authorList>
    </citation>
    <scope>SUMOYLATION [LARGE SCALE ANALYSIS] AT LYS-40; LYS-430; LYS-469 AND LYS-879</scope>
    <scope>IDENTIFICATION BY MASS SPECTROMETRY [LARGE SCALE ANALYSIS]</scope>
</reference>
<reference key="18">
    <citation type="journal article" date="2015" name="Mol. Cell. Proteomics">
        <title>System-wide analysis of SUMOylation dynamics in response to replication stress reveals novel small ubiquitin-like modified target proteins and acceptor lysines relevant for genome stability.</title>
        <authorList>
            <person name="Xiao Z."/>
            <person name="Chang J.G."/>
            <person name="Hendriks I.A."/>
            <person name="Sigurdsson J.O."/>
            <person name="Olsen J.V."/>
            <person name="Vertegaal A.C."/>
        </authorList>
    </citation>
    <scope>SUMOYLATION [LARGE SCALE ANALYSIS] AT LYS-40</scope>
    <scope>IDENTIFICATION BY MASS SPECTROMETRY [LARGE SCALE ANALYSIS]</scope>
</reference>
<reference key="19">
    <citation type="journal article" date="2017" name="Nat. Struct. Mol. Biol.">
        <title>Site-specific mapping of the human SUMO proteome reveals co-modification with phosphorylation.</title>
        <authorList>
            <person name="Hendriks I.A."/>
            <person name="Lyon D."/>
            <person name="Young C."/>
            <person name="Jensen L.J."/>
            <person name="Vertegaal A.C."/>
            <person name="Nielsen M.L."/>
        </authorList>
    </citation>
    <scope>SUMOYLATION [LARGE SCALE ANALYSIS] AT LYS-40; LYS-255; LYS-266; LYS-273; LYS-312; LYS-337; LYS-383; LYS-430; LYS-469; LYS-475; LYS-617; LYS-643; LYS-659; LYS-702; LYS-763; LYS-785; LYS-875; LYS-879 AND LYS-935</scope>
    <scope>IDENTIFICATION BY MASS SPECTROMETRY [LARGE SCALE ANALYSIS]</scope>
</reference>
<reference key="20">
    <citation type="submission" date="2004-11" db="PDB data bank">
        <title>Solution structure of ZF-C2H2 domains from human zinc finger protein 295.</title>
        <authorList>
            <consortium name="RIKEN structural genomics initiative (RSGI)"/>
        </authorList>
    </citation>
    <scope>STRUCTURE BY NMR OF 713-806</scope>
</reference>
<accession>Q9ULJ3</accession>
<accession>Q5R2W1</accession>
<accession>Q5R2W2</accession>
<accession>Q6P4R0</accession>
<comment type="function">
    <text evidence="4">Acts as a transcription repressor.</text>
</comment>
<comment type="subunit">
    <text evidence="4">Homodimer. Interacts with ZBTB14.</text>
</comment>
<comment type="interaction">
    <interactant intactId="EBI-1051048">
        <id>Q9ULJ3</id>
    </interactant>
    <interactant intactId="EBI-7223971">
        <id>Q969K4</id>
        <label>ABTB1</label>
    </interactant>
    <organismsDiffer>false</organismsDiffer>
    <experiments>3</experiments>
</comment>
<comment type="subcellular location">
    <subcellularLocation>
        <location evidence="4">Nucleus</location>
    </subcellularLocation>
    <text>Colocalizes with ZBTB14 in nucleus in HEK293 cells.</text>
</comment>
<comment type="alternative products">
    <event type="alternative splicing"/>
    <isoform>
        <id>Q9ULJ3-1</id>
        <name>1</name>
        <name>ZNF295L</name>
        <sequence type="displayed"/>
    </isoform>
    <isoform>
        <id>Q9ULJ3-2</id>
        <name>2</name>
        <name>ZNF295S</name>
        <sequence type="described" ref="VSP_041349"/>
    </isoform>
</comment>
<comment type="tissue specificity">
    <text evidence="4">Ubiquitous in fetal and adult tissues.</text>
</comment>
<comment type="sequence caution" evidence="6">
    <conflict type="erroneous initiation">
        <sequence resource="EMBL-CDS" id="BAA86541"/>
    </conflict>
    <text>Extended N-terminus.</text>
</comment>